<feature type="chain" id="PRO_1000071606" description="5-methyltetrahydropteroyltriglutamate--homocysteine methyltransferase">
    <location>
        <begin position="1"/>
        <end position="764"/>
    </location>
</feature>
<feature type="active site" description="Proton donor" evidence="1">
    <location>
        <position position="698"/>
    </location>
</feature>
<feature type="binding site" evidence="1">
    <location>
        <begin position="16"/>
        <end position="19"/>
    </location>
    <ligand>
        <name>5-methyltetrahydropteroyltri-L-glutamate</name>
        <dbReference type="ChEBI" id="CHEBI:58207"/>
    </ligand>
</feature>
<feature type="binding site" evidence="1">
    <location>
        <position position="115"/>
    </location>
    <ligand>
        <name>5-methyltetrahydropteroyltri-L-glutamate</name>
        <dbReference type="ChEBI" id="CHEBI:58207"/>
    </ligand>
</feature>
<feature type="binding site" evidence="1">
    <location>
        <begin position="435"/>
        <end position="437"/>
    </location>
    <ligand>
        <name>L-homocysteine</name>
        <dbReference type="ChEBI" id="CHEBI:58199"/>
    </ligand>
</feature>
<feature type="binding site" evidence="1">
    <location>
        <begin position="435"/>
        <end position="437"/>
    </location>
    <ligand>
        <name>L-methionine</name>
        <dbReference type="ChEBI" id="CHEBI:57844"/>
    </ligand>
</feature>
<feature type="binding site" evidence="1">
    <location>
        <position position="488"/>
    </location>
    <ligand>
        <name>L-homocysteine</name>
        <dbReference type="ChEBI" id="CHEBI:58199"/>
    </ligand>
</feature>
<feature type="binding site" evidence="1">
    <location>
        <position position="488"/>
    </location>
    <ligand>
        <name>L-methionine</name>
        <dbReference type="ChEBI" id="CHEBI:57844"/>
    </ligand>
</feature>
<feature type="binding site" evidence="1">
    <location>
        <begin position="519"/>
        <end position="520"/>
    </location>
    <ligand>
        <name>5-methyltetrahydropteroyltri-L-glutamate</name>
        <dbReference type="ChEBI" id="CHEBI:58207"/>
    </ligand>
</feature>
<feature type="binding site" evidence="1">
    <location>
        <position position="565"/>
    </location>
    <ligand>
        <name>5-methyltetrahydropteroyltri-L-glutamate</name>
        <dbReference type="ChEBI" id="CHEBI:58207"/>
    </ligand>
</feature>
<feature type="binding site" evidence="1">
    <location>
        <position position="603"/>
    </location>
    <ligand>
        <name>L-homocysteine</name>
        <dbReference type="ChEBI" id="CHEBI:58199"/>
    </ligand>
</feature>
<feature type="binding site" evidence="1">
    <location>
        <position position="603"/>
    </location>
    <ligand>
        <name>L-methionine</name>
        <dbReference type="ChEBI" id="CHEBI:57844"/>
    </ligand>
</feature>
<feature type="binding site" evidence="1">
    <location>
        <position position="609"/>
    </location>
    <ligand>
        <name>5-methyltetrahydropteroyltri-L-glutamate</name>
        <dbReference type="ChEBI" id="CHEBI:58207"/>
    </ligand>
</feature>
<feature type="binding site" evidence="1">
    <location>
        <position position="645"/>
    </location>
    <ligand>
        <name>Zn(2+)</name>
        <dbReference type="ChEBI" id="CHEBI:29105"/>
        <note>catalytic</note>
    </ligand>
</feature>
<feature type="binding site" evidence="1">
    <location>
        <position position="647"/>
    </location>
    <ligand>
        <name>Zn(2+)</name>
        <dbReference type="ChEBI" id="CHEBI:29105"/>
        <note>catalytic</note>
    </ligand>
</feature>
<feature type="binding site" evidence="1">
    <location>
        <position position="669"/>
    </location>
    <ligand>
        <name>Zn(2+)</name>
        <dbReference type="ChEBI" id="CHEBI:29105"/>
        <note>catalytic</note>
    </ligand>
</feature>
<feature type="binding site" evidence="1">
    <location>
        <position position="730"/>
    </location>
    <ligand>
        <name>Zn(2+)</name>
        <dbReference type="ChEBI" id="CHEBI:29105"/>
        <note>catalytic</note>
    </ligand>
</feature>
<comment type="function">
    <text evidence="1">Catalyzes the transfer of a methyl group from 5-methyltetrahydrofolate to homocysteine resulting in methionine formation.</text>
</comment>
<comment type="catalytic activity">
    <reaction evidence="1">
        <text>5-methyltetrahydropteroyltri-L-glutamate + L-homocysteine = tetrahydropteroyltri-L-glutamate + L-methionine</text>
        <dbReference type="Rhea" id="RHEA:21196"/>
        <dbReference type="ChEBI" id="CHEBI:57844"/>
        <dbReference type="ChEBI" id="CHEBI:58140"/>
        <dbReference type="ChEBI" id="CHEBI:58199"/>
        <dbReference type="ChEBI" id="CHEBI:58207"/>
        <dbReference type="EC" id="2.1.1.14"/>
    </reaction>
</comment>
<comment type="cofactor">
    <cofactor evidence="1">
        <name>Zn(2+)</name>
        <dbReference type="ChEBI" id="CHEBI:29105"/>
    </cofactor>
    <text evidence="1">Binds 1 zinc ion per subunit.</text>
</comment>
<comment type="pathway">
    <text evidence="1">Amino-acid biosynthesis; L-methionine biosynthesis via de novo pathway; L-methionine from L-homocysteine (MetE route): step 1/1.</text>
</comment>
<comment type="similarity">
    <text evidence="1">Belongs to the vitamin-B12 independent methionine synthase family.</text>
</comment>
<proteinExistence type="inferred from homology"/>
<name>METE_BURP6</name>
<keyword id="KW-0028">Amino-acid biosynthesis</keyword>
<keyword id="KW-0479">Metal-binding</keyword>
<keyword id="KW-0486">Methionine biosynthesis</keyword>
<keyword id="KW-0489">Methyltransferase</keyword>
<keyword id="KW-0677">Repeat</keyword>
<keyword id="KW-0808">Transferase</keyword>
<keyword id="KW-0862">Zinc</keyword>
<accession>A3NC70</accession>
<gene>
    <name evidence="1" type="primary">metE</name>
    <name type="ordered locus">BURPS668_2923</name>
</gene>
<organism>
    <name type="scientific">Burkholderia pseudomallei (strain 668)</name>
    <dbReference type="NCBI Taxonomy" id="320373"/>
    <lineage>
        <taxon>Bacteria</taxon>
        <taxon>Pseudomonadati</taxon>
        <taxon>Pseudomonadota</taxon>
        <taxon>Betaproteobacteria</taxon>
        <taxon>Burkholderiales</taxon>
        <taxon>Burkholderiaceae</taxon>
        <taxon>Burkholderia</taxon>
        <taxon>pseudomallei group</taxon>
    </lineage>
</organism>
<reference key="1">
    <citation type="journal article" date="2010" name="Genome Biol. Evol.">
        <title>Continuing evolution of Burkholderia mallei through genome reduction and large-scale rearrangements.</title>
        <authorList>
            <person name="Losada L."/>
            <person name="Ronning C.M."/>
            <person name="DeShazer D."/>
            <person name="Woods D."/>
            <person name="Fedorova N."/>
            <person name="Kim H.S."/>
            <person name="Shabalina S.A."/>
            <person name="Pearson T.R."/>
            <person name="Brinkac L."/>
            <person name="Tan P."/>
            <person name="Nandi T."/>
            <person name="Crabtree J."/>
            <person name="Badger J."/>
            <person name="Beckstrom-Sternberg S."/>
            <person name="Saqib M."/>
            <person name="Schutzer S.E."/>
            <person name="Keim P."/>
            <person name="Nierman W.C."/>
        </authorList>
    </citation>
    <scope>NUCLEOTIDE SEQUENCE [LARGE SCALE GENOMIC DNA]</scope>
    <source>
        <strain>668</strain>
    </source>
</reference>
<sequence>MTTAHILGFPRIGAQRELKFALERYWRDGASADAERALVDTGRALRAEHWRIERDAGLDCVTVGDFAWYDHVLTTLAHVGGLPRRFGFDAHALTLADYFAAARGNAAQPAMEMTKWFDTNYHYLVPEYSPATTFGPGVEWLFDEVREARALGHRAKAALVGPLTLLWLGKARDGLVERLALLPRLVPAYRALLARLREAGVDWVQIDEPIFSLDLPDAWRDAARPTYEALAPGAPKLLVATYFDDASEHAALLKALPVAGLHIDLVRADAQLDAFVADYPADKVLSCGIVDGRNVWRNDLDRSLARLAPVRDALGERLWVATSCSLLHVPVDLAHEPRLDEELKTWLAFAAQKTREVAALRDALVKGRAAVAAEFDDAAAAAAARRTSARIHNPLVKRRVAALTDADARRASTYSVRAAAQRARFGLPLLPTTTIGSFPQTPEIRRARAAFKQGVLDHLGYLEAMREQVRIAIDKQLAYGLDVLVHGEAERNDMVEYFGELLWGFAITSNGWVQSYGSRCVKPPLVYGDVYLPEPMTVGWASYAQSLSAKPVKGMLTGPVTMLQWSFVRDDQPRATTALQIALALRQETLDLEKAGIGMIQIDEPALREGLPLKARERAAYLDWAVRAFGIAASGVADDTQIHTHMCYSEFGDILPSIAALDADVISIETTRSNMELLDAFETFDYPNEIGPGVYDIHSPRVPDADEIERLILLALERIPAQRLWVNPDCGLKTREWRQVDAALAAMVDAAKRVRQKVEEAVPA</sequence>
<protein>
    <recommendedName>
        <fullName evidence="1">5-methyltetrahydropteroyltriglutamate--homocysteine methyltransferase</fullName>
        <ecNumber evidence="1">2.1.1.14</ecNumber>
    </recommendedName>
    <alternativeName>
        <fullName evidence="1">Cobalamin-independent methionine synthase</fullName>
    </alternativeName>
    <alternativeName>
        <fullName evidence="1">Methionine synthase, vitamin-B12 independent isozyme</fullName>
    </alternativeName>
</protein>
<evidence type="ECO:0000255" key="1">
    <source>
        <dbReference type="HAMAP-Rule" id="MF_00172"/>
    </source>
</evidence>
<dbReference type="EC" id="2.1.1.14" evidence="1"/>
<dbReference type="EMBL" id="CP000570">
    <property type="protein sequence ID" value="ABN84840.1"/>
    <property type="molecule type" value="Genomic_DNA"/>
</dbReference>
<dbReference type="RefSeq" id="WP_011852003.1">
    <property type="nucleotide sequence ID" value="NC_009074.1"/>
</dbReference>
<dbReference type="SMR" id="A3NC70"/>
<dbReference type="KEGG" id="bpd:BURPS668_2923"/>
<dbReference type="HOGENOM" id="CLU_013175_0_0_4"/>
<dbReference type="UniPathway" id="UPA00051">
    <property type="reaction ID" value="UER00082"/>
</dbReference>
<dbReference type="GO" id="GO:0003871">
    <property type="term" value="F:5-methyltetrahydropteroyltriglutamate-homocysteine S-methyltransferase activity"/>
    <property type="evidence" value="ECO:0007669"/>
    <property type="project" value="UniProtKB-UniRule"/>
</dbReference>
<dbReference type="GO" id="GO:0008270">
    <property type="term" value="F:zinc ion binding"/>
    <property type="evidence" value="ECO:0007669"/>
    <property type="project" value="InterPro"/>
</dbReference>
<dbReference type="GO" id="GO:0009086">
    <property type="term" value="P:methionine biosynthetic process"/>
    <property type="evidence" value="ECO:0007669"/>
    <property type="project" value="UniProtKB-UniRule"/>
</dbReference>
<dbReference type="GO" id="GO:0032259">
    <property type="term" value="P:methylation"/>
    <property type="evidence" value="ECO:0007669"/>
    <property type="project" value="UniProtKB-KW"/>
</dbReference>
<dbReference type="CDD" id="cd03311">
    <property type="entry name" value="CIMS_C_terminal_like"/>
    <property type="match status" value="1"/>
</dbReference>
<dbReference type="CDD" id="cd03312">
    <property type="entry name" value="CIMS_N_terminal_like"/>
    <property type="match status" value="1"/>
</dbReference>
<dbReference type="Gene3D" id="3.20.20.210">
    <property type="match status" value="2"/>
</dbReference>
<dbReference type="HAMAP" id="MF_00172">
    <property type="entry name" value="Meth_synth"/>
    <property type="match status" value="1"/>
</dbReference>
<dbReference type="InterPro" id="IPR013215">
    <property type="entry name" value="Cbl-indep_Met_Synth_N"/>
</dbReference>
<dbReference type="InterPro" id="IPR006276">
    <property type="entry name" value="Cobalamin-indep_Met_synthase"/>
</dbReference>
<dbReference type="InterPro" id="IPR002629">
    <property type="entry name" value="Met_Synth_C/arc"/>
</dbReference>
<dbReference type="InterPro" id="IPR038071">
    <property type="entry name" value="UROD/MetE-like_sf"/>
</dbReference>
<dbReference type="NCBIfam" id="TIGR01371">
    <property type="entry name" value="met_syn_B12ind"/>
    <property type="match status" value="1"/>
</dbReference>
<dbReference type="NCBIfam" id="NF003556">
    <property type="entry name" value="PRK05222.1"/>
    <property type="match status" value="1"/>
</dbReference>
<dbReference type="PANTHER" id="PTHR30519">
    <property type="entry name" value="5-METHYLTETRAHYDROPTEROYLTRIGLUTAMATE--HOMOCYSTEINE METHYLTRANSFERASE"/>
    <property type="match status" value="1"/>
</dbReference>
<dbReference type="Pfam" id="PF08267">
    <property type="entry name" value="Meth_synt_1"/>
    <property type="match status" value="1"/>
</dbReference>
<dbReference type="Pfam" id="PF01717">
    <property type="entry name" value="Meth_synt_2"/>
    <property type="match status" value="1"/>
</dbReference>
<dbReference type="PIRSF" id="PIRSF000382">
    <property type="entry name" value="MeTrfase_B12_ind"/>
    <property type="match status" value="1"/>
</dbReference>
<dbReference type="SUPFAM" id="SSF51726">
    <property type="entry name" value="UROD/MetE-like"/>
    <property type="match status" value="2"/>
</dbReference>